<evidence type="ECO:0000250" key="1"/>
<evidence type="ECO:0000255" key="2"/>
<evidence type="ECO:0000305" key="3"/>
<organism>
    <name type="scientific">Cyprinus carpio</name>
    <name type="common">Common carp</name>
    <dbReference type="NCBI Taxonomy" id="7962"/>
    <lineage>
        <taxon>Eukaryota</taxon>
        <taxon>Metazoa</taxon>
        <taxon>Chordata</taxon>
        <taxon>Craniata</taxon>
        <taxon>Vertebrata</taxon>
        <taxon>Euteleostomi</taxon>
        <taxon>Actinopterygii</taxon>
        <taxon>Neopterygii</taxon>
        <taxon>Teleostei</taxon>
        <taxon>Ostariophysi</taxon>
        <taxon>Cypriniformes</taxon>
        <taxon>Cyprinidae</taxon>
        <taxon>Cyprininae</taxon>
        <taxon>Cyprinus</taxon>
    </lineage>
</organism>
<proteinExistence type="evidence at transcript level"/>
<comment type="function">
    <text>May play a role in neural plasticity. May be involved during axon regeneration.</text>
</comment>
<comment type="subunit">
    <text evidence="1">Forms disulfide-linked dimers.</text>
</comment>
<comment type="subcellular location">
    <subcellularLocation>
        <location>Secreted</location>
    </subcellularLocation>
</comment>
<comment type="tissue specificity">
    <text>EPDs are synthesized in the meninx and secreted in the cerebrospinal fluid.</text>
</comment>
<comment type="PTM">
    <text>Binds calcium through the terminal sialic acids.</text>
</comment>
<comment type="similarity">
    <text evidence="3">Belongs to the ependymin family.</text>
</comment>
<gene>
    <name type="primary">epd</name>
    <name type="synonym">epn</name>
</gene>
<keyword id="KW-0106">Calcium</keyword>
<keyword id="KW-1015">Disulfide bond</keyword>
<keyword id="KW-0325">Glycoprotein</keyword>
<keyword id="KW-1185">Reference proteome</keyword>
<keyword id="KW-0964">Secreted</keyword>
<keyword id="KW-0732">Signal</keyword>
<sequence>MHTVKLLCVVFSCLCAVAWASSNRQPCHSPPLTSGTMKVVSTGGHDLASGEFSYDSKANKFRFVEDTAHANKTSHMDVLVHFEEGVLYEIDSKNESCKKETLQFRKHLMEIPPDATHESEIYMGSPSITEQGLRVRVWNGKLPELHAHYSLSTTSCGCLPVSGSYYGDKKDLLFSFFGVETEVDDPQVFVPPAYCEAVAFEEAPDDHSFFDLFHD</sequence>
<protein>
    <recommendedName>
        <fullName>Ependymin</fullName>
        <shortName>EPD</shortName>
    </recommendedName>
</protein>
<accession>P38528</accession>
<feature type="signal peptide" evidence="1">
    <location>
        <begin position="1"/>
        <end position="20"/>
    </location>
</feature>
<feature type="chain" id="PRO_0000008344" description="Ependymin">
    <location>
        <begin position="21"/>
        <end position="215"/>
    </location>
</feature>
<feature type="glycosylation site" description="N-linked (GlcNAc...) asparagine" evidence="2">
    <location>
        <position position="71"/>
    </location>
</feature>
<feature type="glycosylation site" description="N-linked (GlcNAc...) asparagine" evidence="2">
    <location>
        <position position="94"/>
    </location>
</feature>
<dbReference type="EMBL" id="U00432">
    <property type="protein sequence ID" value="AAA19565.1"/>
    <property type="molecule type" value="Genomic_DNA"/>
</dbReference>
<dbReference type="PIR" id="I51377">
    <property type="entry name" value="I51377"/>
</dbReference>
<dbReference type="SMR" id="P38528"/>
<dbReference type="GlyCosmos" id="P38528">
    <property type="glycosylation" value="2 sites, No reported glycans"/>
</dbReference>
<dbReference type="Proteomes" id="UP000694384">
    <property type="component" value="Unplaced"/>
</dbReference>
<dbReference type="Proteomes" id="UP000694427">
    <property type="component" value="Unplaced"/>
</dbReference>
<dbReference type="Proteomes" id="UP000694700">
    <property type="component" value="Unplaced"/>
</dbReference>
<dbReference type="Proteomes" id="UP000694701">
    <property type="component" value="Unplaced"/>
</dbReference>
<dbReference type="Proteomes" id="UP001155660">
    <property type="component" value="Unplaced"/>
</dbReference>
<dbReference type="GO" id="GO:0005576">
    <property type="term" value="C:extracellular region"/>
    <property type="evidence" value="ECO:0007669"/>
    <property type="project" value="UniProtKB-SubCell"/>
</dbReference>
<dbReference type="GO" id="GO:0005764">
    <property type="term" value="C:lysosome"/>
    <property type="evidence" value="ECO:0007669"/>
    <property type="project" value="TreeGrafter"/>
</dbReference>
<dbReference type="GO" id="GO:0005509">
    <property type="term" value="F:calcium ion binding"/>
    <property type="evidence" value="ECO:0007669"/>
    <property type="project" value="InterPro"/>
</dbReference>
<dbReference type="GO" id="GO:0007160">
    <property type="term" value="P:cell-matrix adhesion"/>
    <property type="evidence" value="ECO:0007669"/>
    <property type="project" value="InterPro"/>
</dbReference>
<dbReference type="InterPro" id="IPR001299">
    <property type="entry name" value="Ependymin"/>
</dbReference>
<dbReference type="InterPro" id="IPR018224">
    <property type="entry name" value="Ependymin_CS"/>
</dbReference>
<dbReference type="PANTHER" id="PTHR10697:SF5">
    <property type="entry name" value="EPENDYMIN-RELATED"/>
    <property type="match status" value="1"/>
</dbReference>
<dbReference type="PANTHER" id="PTHR10697">
    <property type="entry name" value="MAMMALIAN EPENDYMIN-RELATED PROTEIN 1"/>
    <property type="match status" value="1"/>
</dbReference>
<dbReference type="Pfam" id="PF00811">
    <property type="entry name" value="Ependymin"/>
    <property type="match status" value="1"/>
</dbReference>
<dbReference type="PRINTS" id="PR00317">
    <property type="entry name" value="EPENDYMIN"/>
</dbReference>
<dbReference type="SMART" id="SM00026">
    <property type="entry name" value="EPEND"/>
    <property type="match status" value="1"/>
</dbReference>
<dbReference type="PROSITE" id="PS00898">
    <property type="entry name" value="EPENDYMIN_1"/>
    <property type="match status" value="1"/>
</dbReference>
<dbReference type="PROSITE" id="PS00899">
    <property type="entry name" value="EPENDYMIN_2"/>
    <property type="match status" value="1"/>
</dbReference>
<reference key="1">
    <citation type="journal article" date="1994" name="Gene">
        <title>Cloning and sequencing the genes encoding goldfish and carp ependymin.</title>
        <authorList>
            <person name="Adams D.S."/>
            <person name="Shashoua V.E."/>
        </authorList>
    </citation>
    <scope>NUCLEOTIDE SEQUENCE [GENOMIC DNA]</scope>
    <source>
        <tissue>Brain</tissue>
    </source>
</reference>
<name>EPD_CYPCA</name>